<feature type="transit peptide" description="Chloroplast" evidence="4">
    <location>
        <begin position="1"/>
        <end position="46"/>
    </location>
</feature>
<feature type="chain" id="PRO_0000030690" description="Cytochrome b6-f complex iron-sulfur subunit, chloroplastic">
    <location>
        <begin position="47"/>
        <end position="225"/>
    </location>
</feature>
<feature type="transmembrane region" description="Helical" evidence="2">
    <location>
        <begin position="69"/>
        <end position="89"/>
    </location>
</feature>
<feature type="domain" description="Rieske">
    <location>
        <begin position="112"/>
        <end position="208"/>
    </location>
</feature>
<feature type="binding site" evidence="1">
    <location>
        <position position="154"/>
    </location>
    <ligand>
        <name>[2Fe-2S] cluster</name>
        <dbReference type="ChEBI" id="CHEBI:190135"/>
    </ligand>
</feature>
<feature type="binding site" evidence="1">
    <location>
        <position position="156"/>
    </location>
    <ligand>
        <name>[2Fe-2S] cluster</name>
        <dbReference type="ChEBI" id="CHEBI:190135"/>
    </ligand>
</feature>
<feature type="binding site" evidence="1">
    <location>
        <position position="172"/>
    </location>
    <ligand>
        <name>[2Fe-2S] cluster</name>
        <dbReference type="ChEBI" id="CHEBI:190135"/>
    </ligand>
</feature>
<feature type="binding site" evidence="1">
    <location>
        <position position="175"/>
    </location>
    <ligand>
        <name>[2Fe-2S] cluster</name>
        <dbReference type="ChEBI" id="CHEBI:190135"/>
    </ligand>
</feature>
<feature type="disulfide bond" evidence="1">
    <location>
        <begin position="159"/>
        <end position="174"/>
    </location>
</feature>
<accession>Q69S39</accession>
<accession>Q0D5J7</accession>
<accession>Q9ZSU7</accession>
<protein>
    <recommendedName>
        <fullName>Cytochrome b6-f complex iron-sulfur subunit, chloroplastic</fullName>
        <ecNumber>7.1.1.6</ecNumber>
    </recommendedName>
    <alternativeName>
        <fullName>Plastohydroquinone:plastocyanin oxidoreductase iron-sulfur protein</fullName>
    </alternativeName>
    <alternativeName>
        <fullName>Rieske iron-sulfur protein</fullName>
        <shortName>ISP</shortName>
        <shortName>RISP</shortName>
    </alternativeName>
</protein>
<comment type="function">
    <text evidence="1">Component of the cytochrome b6-f complex, which mediates electron transfer between photosystem II (PSII) and photosystem I (PSI), cyclic electron flow around PSI, and state transitions.</text>
</comment>
<comment type="catalytic activity">
    <reaction>
        <text>2 oxidized [plastocyanin] + a plastoquinol + 2 H(+)(in) = 2 reduced [plastocyanin] + a plastoquinone + 4 H(+)(out)</text>
        <dbReference type="Rhea" id="RHEA:22148"/>
        <dbReference type="Rhea" id="RHEA-COMP:9561"/>
        <dbReference type="Rhea" id="RHEA-COMP:9562"/>
        <dbReference type="Rhea" id="RHEA-COMP:10039"/>
        <dbReference type="Rhea" id="RHEA-COMP:10040"/>
        <dbReference type="ChEBI" id="CHEBI:15378"/>
        <dbReference type="ChEBI" id="CHEBI:17757"/>
        <dbReference type="ChEBI" id="CHEBI:29036"/>
        <dbReference type="ChEBI" id="CHEBI:49552"/>
        <dbReference type="ChEBI" id="CHEBI:62192"/>
        <dbReference type="EC" id="7.1.1.6"/>
    </reaction>
</comment>
<comment type="cofactor">
    <cofactor evidence="1">
        <name>[2Fe-2S] cluster</name>
        <dbReference type="ChEBI" id="CHEBI:190135"/>
    </cofactor>
    <text evidence="1">Binds 1 [2Fe-2S] cluster per subunit.</text>
</comment>
<comment type="subunit">
    <text evidence="1">The 4 large subunits of the cytochrome b6-f complex are cytochrome b6, subunit IV (17 kDa polypeptide, petD), cytochrome f and the Rieske protein, while the 4 small subunits are petG, petL, petM and petN. The complex functions as a dimer (By similarity).</text>
</comment>
<comment type="subcellular location">
    <subcellularLocation>
        <location evidence="1">Plastid</location>
        <location evidence="1">Chloroplast thylakoid membrane</location>
        <topology evidence="1">Single-pass membrane protein</topology>
    </subcellularLocation>
    <text evidence="1">The transmembrane helix obliquely spans the membrane in one monomer, and its extrinsic C-terminal domain is part of the other monomer.</text>
</comment>
<comment type="miscellaneous">
    <text>This protein is 1 of 2 subunits of the cytochrome b6-f complex that are encoded in the nucleus.</text>
</comment>
<comment type="miscellaneous">
    <text>The Rieske iron-sulfur protein is a high potential 2Fe-2S protein.</text>
</comment>
<comment type="similarity">
    <text evidence="3">Belongs to the Rieske iron-sulfur protein family.</text>
</comment>
<keyword id="KW-0001">2Fe-2S</keyword>
<keyword id="KW-0150">Chloroplast</keyword>
<keyword id="KW-0903">Direct protein sequencing</keyword>
<keyword id="KW-1015">Disulfide bond</keyword>
<keyword id="KW-0249">Electron transport</keyword>
<keyword id="KW-0408">Iron</keyword>
<keyword id="KW-0411">Iron-sulfur</keyword>
<keyword id="KW-0472">Membrane</keyword>
<keyword id="KW-0479">Metal-binding</keyword>
<keyword id="KW-0934">Plastid</keyword>
<keyword id="KW-1185">Reference proteome</keyword>
<keyword id="KW-0793">Thylakoid</keyword>
<keyword id="KW-0809">Transit peptide</keyword>
<keyword id="KW-1278">Translocase</keyword>
<keyword id="KW-0812">Transmembrane</keyword>
<keyword id="KW-1133">Transmembrane helix</keyword>
<keyword id="KW-0813">Transport</keyword>
<evidence type="ECO:0000250" key="1"/>
<evidence type="ECO:0000255" key="2"/>
<evidence type="ECO:0000255" key="3">
    <source>
        <dbReference type="HAMAP-Rule" id="MF_01335"/>
    </source>
</evidence>
<evidence type="ECO:0000269" key="4">
    <source>
    </source>
</evidence>
<evidence type="ECO:0000312" key="5">
    <source>
        <dbReference type="EMBL" id="EAZ22943.1"/>
    </source>
</evidence>
<name>UCRIA_ORYSJ</name>
<organism>
    <name type="scientific">Oryza sativa subsp. japonica</name>
    <name type="common">Rice</name>
    <dbReference type="NCBI Taxonomy" id="39947"/>
    <lineage>
        <taxon>Eukaryota</taxon>
        <taxon>Viridiplantae</taxon>
        <taxon>Streptophyta</taxon>
        <taxon>Embryophyta</taxon>
        <taxon>Tracheophyta</taxon>
        <taxon>Spermatophyta</taxon>
        <taxon>Magnoliopsida</taxon>
        <taxon>Liliopsida</taxon>
        <taxon>Poales</taxon>
        <taxon>Poaceae</taxon>
        <taxon>BOP clade</taxon>
        <taxon>Oryzoideae</taxon>
        <taxon>Oryzeae</taxon>
        <taxon>Oryzinae</taxon>
        <taxon>Oryza</taxon>
        <taxon>Oryza sativa</taxon>
    </lineage>
</organism>
<gene>
    <name type="primary">petC</name>
    <name type="ordered locus">Os07g0556200</name>
    <name type="ordered locus">LOC_Os07g37030</name>
    <name evidence="5" type="ORF">OsJ_06631</name>
    <name type="ORF">OSJNBa0058I18.25</name>
</gene>
<sequence>MASTALSTASNPTQLCRSRASLGKPVKGLGFGRERVPRTATTITCQAASSIPADRVPDMGKRQLMNLLLLGAISLPTVGMLVPYGAFFIPAGSGNAGGGQVAKDKLGNDVLAEEWLKTHGPNDRTLTQGLKGDPTYLVVEADKTLATYGINAVCTHLGCVVPWNAAENKFICPCHGSQYNNQGRVVRGPAPLSLALVHADVDDGKVLFVPWVETDFRTGDNPWWA</sequence>
<proteinExistence type="evidence at protein level"/>
<reference key="1">
    <citation type="submission" date="1998-09" db="EMBL/GenBank/DDBJ databases">
        <title>Molecular cloning and characterization of cytochrome B6/F-complex iron-sulfur protein in rice.</title>
        <authorList>
            <person name="Lee J.-S."/>
        </authorList>
    </citation>
    <scope>NUCLEOTIDE SEQUENCE [MRNA]</scope>
    <source>
        <strain>cv. Ilpoom</strain>
        <tissue>Seedling leaf</tissue>
    </source>
</reference>
<reference key="2">
    <citation type="journal article" date="2005" name="Nature">
        <title>The map-based sequence of the rice genome.</title>
        <authorList>
            <consortium name="International rice genome sequencing project (IRGSP)"/>
        </authorList>
    </citation>
    <scope>NUCLEOTIDE SEQUENCE [LARGE SCALE GENOMIC DNA]</scope>
    <source>
        <strain>cv. Nipponbare</strain>
    </source>
</reference>
<reference key="3">
    <citation type="journal article" date="2008" name="Nucleic Acids Res.">
        <title>The rice annotation project database (RAP-DB): 2008 update.</title>
        <authorList>
            <consortium name="The rice annotation project (RAP)"/>
        </authorList>
    </citation>
    <scope>GENOME REANNOTATION</scope>
    <source>
        <strain>cv. Nipponbare</strain>
    </source>
</reference>
<reference key="4">
    <citation type="journal article" date="2013" name="Rice">
        <title>Improvement of the Oryza sativa Nipponbare reference genome using next generation sequence and optical map data.</title>
        <authorList>
            <person name="Kawahara Y."/>
            <person name="de la Bastide M."/>
            <person name="Hamilton J.P."/>
            <person name="Kanamori H."/>
            <person name="McCombie W.R."/>
            <person name="Ouyang S."/>
            <person name="Schwartz D.C."/>
            <person name="Tanaka T."/>
            <person name="Wu J."/>
            <person name="Zhou S."/>
            <person name="Childs K.L."/>
            <person name="Davidson R.M."/>
            <person name="Lin H."/>
            <person name="Quesada-Ocampo L."/>
            <person name="Vaillancourt B."/>
            <person name="Sakai H."/>
            <person name="Lee S.S."/>
            <person name="Kim J."/>
            <person name="Numa H."/>
            <person name="Itoh T."/>
            <person name="Buell C.R."/>
            <person name="Matsumoto T."/>
        </authorList>
    </citation>
    <scope>GENOME REANNOTATION</scope>
    <source>
        <strain>cv. Nipponbare</strain>
    </source>
</reference>
<reference key="5">
    <citation type="journal article" date="2005" name="PLoS Biol.">
        <title>The genomes of Oryza sativa: a history of duplications.</title>
        <authorList>
            <person name="Yu J."/>
            <person name="Wang J."/>
            <person name="Lin W."/>
            <person name="Li S."/>
            <person name="Li H."/>
            <person name="Zhou J."/>
            <person name="Ni P."/>
            <person name="Dong W."/>
            <person name="Hu S."/>
            <person name="Zeng C."/>
            <person name="Zhang J."/>
            <person name="Zhang Y."/>
            <person name="Li R."/>
            <person name="Xu Z."/>
            <person name="Li S."/>
            <person name="Li X."/>
            <person name="Zheng H."/>
            <person name="Cong L."/>
            <person name="Lin L."/>
            <person name="Yin J."/>
            <person name="Geng J."/>
            <person name="Li G."/>
            <person name="Shi J."/>
            <person name="Liu J."/>
            <person name="Lv H."/>
            <person name="Li J."/>
            <person name="Wang J."/>
            <person name="Deng Y."/>
            <person name="Ran L."/>
            <person name="Shi X."/>
            <person name="Wang X."/>
            <person name="Wu Q."/>
            <person name="Li C."/>
            <person name="Ren X."/>
            <person name="Wang J."/>
            <person name="Wang X."/>
            <person name="Li D."/>
            <person name="Liu D."/>
            <person name="Zhang X."/>
            <person name="Ji Z."/>
            <person name="Zhao W."/>
            <person name="Sun Y."/>
            <person name="Zhang Z."/>
            <person name="Bao J."/>
            <person name="Han Y."/>
            <person name="Dong L."/>
            <person name="Ji J."/>
            <person name="Chen P."/>
            <person name="Wu S."/>
            <person name="Liu J."/>
            <person name="Xiao Y."/>
            <person name="Bu D."/>
            <person name="Tan J."/>
            <person name="Yang L."/>
            <person name="Ye C."/>
            <person name="Zhang J."/>
            <person name="Xu J."/>
            <person name="Zhou Y."/>
            <person name="Yu Y."/>
            <person name="Zhang B."/>
            <person name="Zhuang S."/>
            <person name="Wei H."/>
            <person name="Liu B."/>
            <person name="Lei M."/>
            <person name="Yu H."/>
            <person name="Li Y."/>
            <person name="Xu H."/>
            <person name="Wei S."/>
            <person name="He X."/>
            <person name="Fang L."/>
            <person name="Zhang Z."/>
            <person name="Zhang Y."/>
            <person name="Huang X."/>
            <person name="Su Z."/>
            <person name="Tong W."/>
            <person name="Li J."/>
            <person name="Tong Z."/>
            <person name="Li S."/>
            <person name="Ye J."/>
            <person name="Wang L."/>
            <person name="Fang L."/>
            <person name="Lei T."/>
            <person name="Chen C.-S."/>
            <person name="Chen H.-C."/>
            <person name="Xu Z."/>
            <person name="Li H."/>
            <person name="Huang H."/>
            <person name="Zhang F."/>
            <person name="Xu H."/>
            <person name="Li N."/>
            <person name="Zhao C."/>
            <person name="Li S."/>
            <person name="Dong L."/>
            <person name="Huang Y."/>
            <person name="Li L."/>
            <person name="Xi Y."/>
            <person name="Qi Q."/>
            <person name="Li W."/>
            <person name="Zhang B."/>
            <person name="Hu W."/>
            <person name="Zhang Y."/>
            <person name="Tian X."/>
            <person name="Jiao Y."/>
            <person name="Liang X."/>
            <person name="Jin J."/>
            <person name="Gao L."/>
            <person name="Zheng W."/>
            <person name="Hao B."/>
            <person name="Liu S.-M."/>
            <person name="Wang W."/>
            <person name="Yuan L."/>
            <person name="Cao M."/>
            <person name="McDermott J."/>
            <person name="Samudrala R."/>
            <person name="Wang J."/>
            <person name="Wong G.K.-S."/>
            <person name="Yang H."/>
        </authorList>
    </citation>
    <scope>NUCLEOTIDE SEQUENCE [LARGE SCALE GENOMIC DNA]</scope>
    <source>
        <strain>cv. Nipponbare</strain>
    </source>
</reference>
<reference key="6">
    <citation type="journal article" date="2003" name="Science">
        <title>Collection, mapping, and annotation of over 28,000 cDNA clones from japonica rice.</title>
        <authorList>
            <consortium name="The rice full-length cDNA consortium"/>
        </authorList>
    </citation>
    <scope>NUCLEOTIDE SEQUENCE [LARGE SCALE MRNA]</scope>
    <source>
        <strain>cv. Nipponbare</strain>
    </source>
</reference>
<reference key="7">
    <citation type="journal article" date="2004" name="Nucleic Acids Res.">
        <title>Rice proteome database based on two-dimensional polyacrylamide gel electrophoresis: its status in 2003.</title>
        <authorList>
            <person name="Komatsu S."/>
            <person name="Kojima K."/>
            <person name="Suzuki K."/>
            <person name="Ozaki K."/>
            <person name="Higo K."/>
        </authorList>
    </citation>
    <scope>PROTEIN SEQUENCE OF 47-56</scope>
    <source>
        <strain>cv. Nipponbare</strain>
        <tissue>Leaf</tissue>
    </source>
</reference>
<dbReference type="EC" id="7.1.1.6"/>
<dbReference type="EMBL" id="AF093631">
    <property type="protein sequence ID" value="AAC78103.1"/>
    <property type="molecule type" value="mRNA"/>
</dbReference>
<dbReference type="EMBL" id="AP005125">
    <property type="protein sequence ID" value="BAD30907.1"/>
    <property type="molecule type" value="Genomic_DNA"/>
</dbReference>
<dbReference type="EMBL" id="AP008213">
    <property type="protein sequence ID" value="BAF21876.1"/>
    <property type="molecule type" value="Genomic_DNA"/>
</dbReference>
<dbReference type="EMBL" id="AP014963">
    <property type="protein sequence ID" value="BAT02104.1"/>
    <property type="molecule type" value="Genomic_DNA"/>
</dbReference>
<dbReference type="EMBL" id="CM000139">
    <property type="protein sequence ID" value="EAZ22943.1"/>
    <property type="molecule type" value="Genomic_DNA"/>
</dbReference>
<dbReference type="EMBL" id="AK071634">
    <property type="protein sequence ID" value="BAG92596.1"/>
    <property type="molecule type" value="mRNA"/>
</dbReference>
<dbReference type="RefSeq" id="XP_015647138.1">
    <property type="nucleotide sequence ID" value="XM_015791652.1"/>
</dbReference>
<dbReference type="SMR" id="Q69S39"/>
<dbReference type="FunCoup" id="Q69S39">
    <property type="interactions" value="1240"/>
</dbReference>
<dbReference type="STRING" id="39947.Q69S39"/>
<dbReference type="PaxDb" id="39947-Q69S39"/>
<dbReference type="EnsemblPlants" id="Os07t0556200-01">
    <property type="protein sequence ID" value="Os07t0556200-01"/>
    <property type="gene ID" value="Os07g0556200"/>
</dbReference>
<dbReference type="Gramene" id="Os07t0556200-01">
    <property type="protein sequence ID" value="Os07t0556200-01"/>
    <property type="gene ID" value="Os07g0556200"/>
</dbReference>
<dbReference type="KEGG" id="dosa:Os07g0556200"/>
<dbReference type="eggNOG" id="KOG1671">
    <property type="taxonomic scope" value="Eukaryota"/>
</dbReference>
<dbReference type="HOGENOM" id="CLU_055690_8_0_1"/>
<dbReference type="InParanoid" id="Q69S39"/>
<dbReference type="OMA" id="RCARLQW"/>
<dbReference type="OrthoDB" id="1637982at2759"/>
<dbReference type="Proteomes" id="UP000000763">
    <property type="component" value="Chromosome 7"/>
</dbReference>
<dbReference type="Proteomes" id="UP000007752">
    <property type="component" value="Chromosome 2"/>
</dbReference>
<dbReference type="Proteomes" id="UP000059680">
    <property type="component" value="Chromosome 7"/>
</dbReference>
<dbReference type="GO" id="GO:0009535">
    <property type="term" value="C:chloroplast thylakoid membrane"/>
    <property type="evidence" value="ECO:0007669"/>
    <property type="project" value="UniProtKB-SubCell"/>
</dbReference>
<dbReference type="GO" id="GO:0005886">
    <property type="term" value="C:plasma membrane"/>
    <property type="evidence" value="ECO:0000318"/>
    <property type="project" value="GO_Central"/>
</dbReference>
<dbReference type="GO" id="GO:0051537">
    <property type="term" value="F:2 iron, 2 sulfur cluster binding"/>
    <property type="evidence" value="ECO:0007669"/>
    <property type="project" value="UniProtKB-KW"/>
</dbReference>
<dbReference type="GO" id="GO:0045158">
    <property type="term" value="F:electron transporter, transferring electrons within cytochrome b6/f complex of photosystem II activity"/>
    <property type="evidence" value="ECO:0007669"/>
    <property type="project" value="InterPro"/>
</dbReference>
<dbReference type="GO" id="GO:0046872">
    <property type="term" value="F:metal ion binding"/>
    <property type="evidence" value="ECO:0007669"/>
    <property type="project" value="UniProtKB-KW"/>
</dbReference>
<dbReference type="GO" id="GO:0016491">
    <property type="term" value="F:oxidoreductase activity"/>
    <property type="evidence" value="ECO:0000318"/>
    <property type="project" value="GO_Central"/>
</dbReference>
<dbReference type="GO" id="GO:0009496">
    <property type="term" value="F:plastoquinol--plastocyanin reductase activity"/>
    <property type="evidence" value="ECO:0007669"/>
    <property type="project" value="UniProtKB-EC"/>
</dbReference>
<dbReference type="CDD" id="cd03471">
    <property type="entry name" value="Rieske_cytochrome_b6f"/>
    <property type="match status" value="1"/>
</dbReference>
<dbReference type="FunFam" id="1.20.5.700:FF:000002">
    <property type="entry name" value="Cytochrome b6-f complex iron-sulfur subunit"/>
    <property type="match status" value="1"/>
</dbReference>
<dbReference type="FunFam" id="2.102.10.10:FF:000007">
    <property type="entry name" value="Cytochrome b6-f complex iron-sulfur subunit"/>
    <property type="match status" value="1"/>
</dbReference>
<dbReference type="Gene3D" id="2.102.10.10">
    <property type="entry name" value="Rieske [2Fe-2S] iron-sulphur domain"/>
    <property type="match status" value="1"/>
</dbReference>
<dbReference type="Gene3D" id="1.20.5.700">
    <property type="entry name" value="Single helix bin"/>
    <property type="match status" value="1"/>
</dbReference>
<dbReference type="HAMAP" id="MF_01335">
    <property type="entry name" value="Cytb6_f_Rieske"/>
    <property type="match status" value="1"/>
</dbReference>
<dbReference type="InterPro" id="IPR023960">
    <property type="entry name" value="Cyt_b6_f_Rieske"/>
</dbReference>
<dbReference type="InterPro" id="IPR017941">
    <property type="entry name" value="Rieske_2Fe-2S"/>
</dbReference>
<dbReference type="InterPro" id="IPR036922">
    <property type="entry name" value="Rieske_2Fe-2S_sf"/>
</dbReference>
<dbReference type="InterPro" id="IPR014349">
    <property type="entry name" value="Rieske_Fe-S_prot"/>
</dbReference>
<dbReference type="InterPro" id="IPR005805">
    <property type="entry name" value="Rieske_Fe-S_prot_C"/>
</dbReference>
<dbReference type="NCBIfam" id="NF045928">
    <property type="entry name" value="Cytb6fFeSPetC"/>
    <property type="match status" value="1"/>
</dbReference>
<dbReference type="NCBIfam" id="NF010001">
    <property type="entry name" value="PRK13474.1"/>
    <property type="match status" value="1"/>
</dbReference>
<dbReference type="PANTHER" id="PTHR10134">
    <property type="entry name" value="CYTOCHROME B-C1 COMPLEX SUBUNIT RIESKE, MITOCHONDRIAL"/>
    <property type="match status" value="1"/>
</dbReference>
<dbReference type="Pfam" id="PF00355">
    <property type="entry name" value="Rieske"/>
    <property type="match status" value="1"/>
</dbReference>
<dbReference type="Pfam" id="PF25471">
    <property type="entry name" value="TM_PetC"/>
    <property type="match status" value="1"/>
</dbReference>
<dbReference type="PRINTS" id="PR00162">
    <property type="entry name" value="RIESKE"/>
</dbReference>
<dbReference type="SUPFAM" id="SSF50022">
    <property type="entry name" value="ISP domain"/>
    <property type="match status" value="1"/>
</dbReference>
<dbReference type="PROSITE" id="PS51296">
    <property type="entry name" value="RIESKE"/>
    <property type="match status" value="1"/>
</dbReference>